<reference key="1">
    <citation type="journal article" date="2004" name="FEMS Yeast Res.">
        <title>The SUV3 gene from Saccharomyces douglasii is a functional equivalent of its Saccharomyces cerevisiae orthologue and is essential for respiratory growth.</title>
        <authorList>
            <person name="Golik P."/>
            <person name="Zwolinska U."/>
            <person name="Stepien P.P."/>
            <person name="Lazowska J."/>
        </authorList>
    </citation>
    <scope>NUCLEOTIDE SEQUENCE [GENOMIC DNA]</scope>
    <scope>FUNCTION</scope>
    <source>
        <strain>CX1</strain>
    </source>
</reference>
<keyword id="KW-0067">ATP-binding</keyword>
<keyword id="KW-0347">Helicase</keyword>
<keyword id="KW-0378">Hydrolase</keyword>
<keyword id="KW-0496">Mitochondrion</keyword>
<keyword id="KW-0547">Nucleotide-binding</keyword>
<keyword id="KW-0694">RNA-binding</keyword>
<keyword id="KW-0809">Transit peptide</keyword>
<comment type="function">
    <text evidence="5">Probable ATP-dependent RNA helicase involved in a variety of mitochondrial post-transcriptional processes and in translation. It is a key control element in nuclear-mitochondrial interactions.</text>
</comment>
<comment type="catalytic activity">
    <reaction>
        <text>ATP + H2O = ADP + phosphate + H(+)</text>
        <dbReference type="Rhea" id="RHEA:13065"/>
        <dbReference type="ChEBI" id="CHEBI:15377"/>
        <dbReference type="ChEBI" id="CHEBI:15378"/>
        <dbReference type="ChEBI" id="CHEBI:30616"/>
        <dbReference type="ChEBI" id="CHEBI:43474"/>
        <dbReference type="ChEBI" id="CHEBI:456216"/>
        <dbReference type="EC" id="3.6.4.13"/>
    </reaction>
</comment>
<comment type="subcellular location">
    <subcellularLocation>
        <location evidence="1">Mitochondrion</location>
    </subcellularLocation>
</comment>
<comment type="similarity">
    <text evidence="6">Belongs to the helicase family.</text>
</comment>
<name>SUV3_SACPA</name>
<feature type="transit peptide" description="Mitochondrion" evidence="2">
    <location>
        <begin position="1"/>
        <end position="25"/>
    </location>
</feature>
<feature type="chain" id="PRO_0000013305" description="ATP-dependent RNA helicase SUV3, mitochondrial">
    <location>
        <begin position="26"/>
        <end position="737"/>
    </location>
</feature>
<feature type="domain" description="Helicase ATP-binding" evidence="3">
    <location>
        <begin position="226"/>
        <end position="365"/>
    </location>
</feature>
<feature type="domain" description="Helicase C-terminal" evidence="4">
    <location>
        <begin position="390"/>
        <end position="546"/>
    </location>
</feature>
<feature type="binding site" evidence="3">
    <location>
        <begin position="239"/>
        <end position="246"/>
    </location>
    <ligand>
        <name>ATP</name>
        <dbReference type="ChEBI" id="CHEBI:30616"/>
    </ligand>
</feature>
<protein>
    <recommendedName>
        <fullName>ATP-dependent RNA helicase SUV3, mitochondrial</fullName>
        <ecNumber>3.6.4.13</ecNumber>
    </recommendedName>
</protein>
<sequence>MTLVKYSTIAFPLRSFRLFIFVKKALYHNEPHSIDPFHDKNWIVKRPKFLNLPKNEHSKLDVFQFNFNKSKSNNVYLRDPLFRDNLDKAMQIIYNEKLSSLDAKQVPIKNLAWLKLRDSIYQQLEDPKQQTKNYVPSISEIIYPSSPGNLISLLINCNKIGNSVWKSILKNGQSNNISTLDKFIHVLQQTFDHMYEQEILPMMTNTDDTDGAHNVDITNPAEWFSEARKIRRHIIMHIGPTNSGKTYRALQKLKSVDRGYYAGPLRLLAREVYDRFQSEKVRCNLLTGEEVIRDLDDKGNPAGLTSGTVEMVPINQKFDVVVLDEIQMMSDADRGWAWTNALLGVVSKEVHLVGEKSVLPLVKSIVKMTGDKLTINEYERLGKLSVEDKPVKDGIKGLRKGDCVVAFSKKKVLDLKLKIEKDTNLKVAVIYGSLPPETRVQQAALFNNGEYDIMVASDAIGMGLNLSIDRVVFTTNMKYNGEELMEMTSSQIKQIGGRAGRFKSKSTSGGVPQGFITSFESKVLKSVRKAIESPIEYLKTAVTWPTDEICAQLMTQFPPGTPTSDLLQTISDELERSSDNLFTLSDLKSKLKVIGLFEHMEDIPFFDKLKLSNAPVKDMPMVTKAFTKFCETIAKRHTRGLLSYRLPFNLLDYNCIPNESYSLEVYESLYNIITLYFWLSNRYPNYFIDMESAKDLKYFCEMIIFEKLDRLKKNPYAHKPFGSTRGQFPSSRGRLRT</sequence>
<organism>
    <name type="scientific">Saccharomyces paradoxus</name>
    <name type="common">Yeast</name>
    <name type="synonym">Saccharomyces douglasii</name>
    <dbReference type="NCBI Taxonomy" id="27291"/>
    <lineage>
        <taxon>Eukaryota</taxon>
        <taxon>Fungi</taxon>
        <taxon>Dikarya</taxon>
        <taxon>Ascomycota</taxon>
        <taxon>Saccharomycotina</taxon>
        <taxon>Saccharomycetes</taxon>
        <taxon>Saccharomycetales</taxon>
        <taxon>Saccharomycetaceae</taxon>
        <taxon>Saccharomyces</taxon>
    </lineage>
</organism>
<evidence type="ECO:0000250" key="1"/>
<evidence type="ECO:0000255" key="2"/>
<evidence type="ECO:0000255" key="3">
    <source>
        <dbReference type="PROSITE-ProRule" id="PRU00541"/>
    </source>
</evidence>
<evidence type="ECO:0000255" key="4">
    <source>
        <dbReference type="PROSITE-ProRule" id="PRU00542"/>
    </source>
</evidence>
<evidence type="ECO:0000269" key="5">
    <source>
    </source>
</evidence>
<evidence type="ECO:0000305" key="6"/>
<dbReference type="EC" id="3.6.4.13"/>
<dbReference type="EMBL" id="AJ011586">
    <property type="protein sequence ID" value="CAA09716.1"/>
    <property type="molecule type" value="Genomic_DNA"/>
</dbReference>
<dbReference type="SMR" id="O74727"/>
<dbReference type="VEuPathDB" id="FungiDB:SPAR_P02350"/>
<dbReference type="GO" id="GO:0045025">
    <property type="term" value="C:mitochondrial degradosome"/>
    <property type="evidence" value="ECO:0007669"/>
    <property type="project" value="TreeGrafter"/>
</dbReference>
<dbReference type="GO" id="GO:0005524">
    <property type="term" value="F:ATP binding"/>
    <property type="evidence" value="ECO:0007669"/>
    <property type="project" value="UniProtKB-KW"/>
</dbReference>
<dbReference type="GO" id="GO:0016887">
    <property type="term" value="F:ATP hydrolysis activity"/>
    <property type="evidence" value="ECO:0007669"/>
    <property type="project" value="RHEA"/>
</dbReference>
<dbReference type="GO" id="GO:0003723">
    <property type="term" value="F:RNA binding"/>
    <property type="evidence" value="ECO:0007669"/>
    <property type="project" value="UniProtKB-KW"/>
</dbReference>
<dbReference type="GO" id="GO:0003724">
    <property type="term" value="F:RNA helicase activity"/>
    <property type="evidence" value="ECO:0007669"/>
    <property type="project" value="UniProtKB-EC"/>
</dbReference>
<dbReference type="GO" id="GO:0000965">
    <property type="term" value="P:mitochondrial RNA 3'-end processing"/>
    <property type="evidence" value="ECO:0007669"/>
    <property type="project" value="TreeGrafter"/>
</dbReference>
<dbReference type="CDD" id="cd17913">
    <property type="entry name" value="DEXQc_Suv3"/>
    <property type="match status" value="1"/>
</dbReference>
<dbReference type="CDD" id="cd18805">
    <property type="entry name" value="SF2_C_suv3"/>
    <property type="match status" value="1"/>
</dbReference>
<dbReference type="FunFam" id="3.40.50.300:FF:000269">
    <property type="entry name" value="ATP-dependent RNA helicase SUPV3L1, mitochondrial"/>
    <property type="match status" value="1"/>
</dbReference>
<dbReference type="FunFam" id="1.20.58.1080:FF:000004">
    <property type="entry name" value="SUV3p ATP-dependent RNA helicase"/>
    <property type="match status" value="1"/>
</dbReference>
<dbReference type="FunFam" id="3.40.50.300:FF:001549">
    <property type="entry name" value="SUV3p ATP-dependent RNA helicase"/>
    <property type="match status" value="1"/>
</dbReference>
<dbReference type="Gene3D" id="1.20.272.40">
    <property type="match status" value="1"/>
</dbReference>
<dbReference type="Gene3D" id="1.20.58.1080">
    <property type="match status" value="1"/>
</dbReference>
<dbReference type="Gene3D" id="3.40.50.300">
    <property type="entry name" value="P-loop containing nucleotide triphosphate hydrolases"/>
    <property type="match status" value="2"/>
</dbReference>
<dbReference type="InterPro" id="IPR055206">
    <property type="entry name" value="DEXQc_SUV3"/>
</dbReference>
<dbReference type="InterPro" id="IPR014001">
    <property type="entry name" value="Helicase_ATP-bd"/>
</dbReference>
<dbReference type="InterPro" id="IPR001650">
    <property type="entry name" value="Helicase_C-like"/>
</dbReference>
<dbReference type="InterPro" id="IPR027417">
    <property type="entry name" value="P-loop_NTPase"/>
</dbReference>
<dbReference type="InterPro" id="IPR050699">
    <property type="entry name" value="RNA-DNA_Helicase"/>
</dbReference>
<dbReference type="InterPro" id="IPR022192">
    <property type="entry name" value="SUV3_C"/>
</dbReference>
<dbReference type="InterPro" id="IPR044774">
    <property type="entry name" value="Suv3_DEXQc"/>
</dbReference>
<dbReference type="PANTHER" id="PTHR12131">
    <property type="entry name" value="ATP-DEPENDENT RNA AND DNA HELICASE"/>
    <property type="match status" value="1"/>
</dbReference>
<dbReference type="PANTHER" id="PTHR12131:SF1">
    <property type="entry name" value="ATP-DEPENDENT RNA HELICASE SUPV3L1, MITOCHONDRIAL-RELATED"/>
    <property type="match status" value="1"/>
</dbReference>
<dbReference type="Pfam" id="PF22527">
    <property type="entry name" value="DEXQc_Suv3"/>
    <property type="match status" value="1"/>
</dbReference>
<dbReference type="Pfam" id="PF00271">
    <property type="entry name" value="Helicase_C"/>
    <property type="match status" value="1"/>
</dbReference>
<dbReference type="Pfam" id="PF12513">
    <property type="entry name" value="SUV3_C"/>
    <property type="match status" value="1"/>
</dbReference>
<dbReference type="SMART" id="SM00487">
    <property type="entry name" value="DEXDc"/>
    <property type="match status" value="1"/>
</dbReference>
<dbReference type="SMART" id="SM00490">
    <property type="entry name" value="HELICc"/>
    <property type="match status" value="1"/>
</dbReference>
<dbReference type="SUPFAM" id="SSF52540">
    <property type="entry name" value="P-loop containing nucleoside triphosphate hydrolases"/>
    <property type="match status" value="1"/>
</dbReference>
<dbReference type="PROSITE" id="PS51192">
    <property type="entry name" value="HELICASE_ATP_BIND_1"/>
    <property type="match status" value="1"/>
</dbReference>
<dbReference type="PROSITE" id="PS51194">
    <property type="entry name" value="HELICASE_CTER"/>
    <property type="match status" value="1"/>
</dbReference>
<accession>O74727</accession>
<gene>
    <name type="primary">SUV3</name>
</gene>
<proteinExistence type="inferred from homology"/>